<name>KADA_METM6</name>
<accession>A9AAR7</accession>
<organism>
    <name type="scientific">Methanococcus maripaludis (strain C6 / ATCC BAA-1332)</name>
    <dbReference type="NCBI Taxonomy" id="444158"/>
    <lineage>
        <taxon>Archaea</taxon>
        <taxon>Methanobacteriati</taxon>
        <taxon>Methanobacteriota</taxon>
        <taxon>Methanomada group</taxon>
        <taxon>Methanococci</taxon>
        <taxon>Methanococcales</taxon>
        <taxon>Methanococcaceae</taxon>
        <taxon>Methanococcus</taxon>
    </lineage>
</organism>
<proteinExistence type="inferred from homology"/>
<protein>
    <recommendedName>
        <fullName evidence="1">Adenylate kinase</fullName>
        <shortName evidence="1">AK</shortName>
        <ecNumber evidence="1">2.7.4.3</ecNumber>
    </recommendedName>
    <alternativeName>
        <fullName evidence="1">ATP-AMP transphosphorylase</fullName>
    </alternativeName>
</protein>
<gene>
    <name evidence="1" type="primary">adkA</name>
    <name type="ordered locus">MmarC6_1628</name>
</gene>
<reference key="1">
    <citation type="submission" date="2007-10" db="EMBL/GenBank/DDBJ databases">
        <title>Complete sequence of Methanococcus maripaludis C6.</title>
        <authorList>
            <consortium name="US DOE Joint Genome Institute"/>
            <person name="Copeland A."/>
            <person name="Lucas S."/>
            <person name="Lapidus A."/>
            <person name="Barry K."/>
            <person name="Glavina del Rio T."/>
            <person name="Dalin E."/>
            <person name="Tice H."/>
            <person name="Pitluck S."/>
            <person name="Clum A."/>
            <person name="Schmutz J."/>
            <person name="Larimer F."/>
            <person name="Land M."/>
            <person name="Hauser L."/>
            <person name="Kyrpides N."/>
            <person name="Mikhailova N."/>
            <person name="Sieprawska-Lupa M."/>
            <person name="Whitman W.B."/>
            <person name="Richardson P."/>
        </authorList>
    </citation>
    <scope>NUCLEOTIDE SEQUENCE [LARGE SCALE GENOMIC DNA]</scope>
    <source>
        <strain>C6 / ATCC BAA-1332</strain>
    </source>
</reference>
<feature type="chain" id="PRO_1000100517" description="Adenylate kinase">
    <location>
        <begin position="1"/>
        <end position="192"/>
    </location>
</feature>
<feature type="binding site" evidence="1">
    <location>
        <begin position="10"/>
        <end position="18"/>
    </location>
    <ligand>
        <name>ATP</name>
        <dbReference type="ChEBI" id="CHEBI:30616"/>
    </ligand>
</feature>
<comment type="catalytic activity">
    <reaction evidence="1">
        <text>AMP + ATP = 2 ADP</text>
        <dbReference type="Rhea" id="RHEA:12973"/>
        <dbReference type="ChEBI" id="CHEBI:30616"/>
        <dbReference type="ChEBI" id="CHEBI:456215"/>
        <dbReference type="ChEBI" id="CHEBI:456216"/>
        <dbReference type="EC" id="2.7.4.3"/>
    </reaction>
</comment>
<comment type="subunit">
    <text evidence="1">Monomer.</text>
</comment>
<comment type="subcellular location">
    <subcellularLocation>
        <location evidence="1">Cytoplasm</location>
    </subcellularLocation>
</comment>
<comment type="similarity">
    <text evidence="1">Belongs to the archaeal adenylate kinase family.</text>
</comment>
<keyword id="KW-0067">ATP-binding</keyword>
<keyword id="KW-0963">Cytoplasm</keyword>
<keyword id="KW-0418">Kinase</keyword>
<keyword id="KW-0547">Nucleotide-binding</keyword>
<keyword id="KW-0808">Transferase</keyword>
<dbReference type="EC" id="2.7.4.3" evidence="1"/>
<dbReference type="EMBL" id="CP000867">
    <property type="protein sequence ID" value="ABX02440.1"/>
    <property type="molecule type" value="Genomic_DNA"/>
</dbReference>
<dbReference type="SMR" id="A9AAR7"/>
<dbReference type="STRING" id="444158.MmarC6_1628"/>
<dbReference type="KEGG" id="mmx:MmarC6_1628"/>
<dbReference type="eggNOG" id="arCOG01039">
    <property type="taxonomic scope" value="Archaea"/>
</dbReference>
<dbReference type="HOGENOM" id="CLU_119371_0_0_2"/>
<dbReference type="OrthoDB" id="26198at2157"/>
<dbReference type="PhylomeDB" id="A9AAR7"/>
<dbReference type="GO" id="GO:0005737">
    <property type="term" value="C:cytoplasm"/>
    <property type="evidence" value="ECO:0007669"/>
    <property type="project" value="UniProtKB-SubCell"/>
</dbReference>
<dbReference type="GO" id="GO:0004017">
    <property type="term" value="F:adenylate kinase activity"/>
    <property type="evidence" value="ECO:0007669"/>
    <property type="project" value="UniProtKB-UniRule"/>
</dbReference>
<dbReference type="GO" id="GO:0005524">
    <property type="term" value="F:ATP binding"/>
    <property type="evidence" value="ECO:0007669"/>
    <property type="project" value="UniProtKB-UniRule"/>
</dbReference>
<dbReference type="Gene3D" id="3.40.50.300">
    <property type="entry name" value="P-loop containing nucleotide triphosphate hydrolases"/>
    <property type="match status" value="1"/>
</dbReference>
<dbReference type="HAMAP" id="MF_00234">
    <property type="entry name" value="Adenylate_kinase_AdkA"/>
    <property type="match status" value="1"/>
</dbReference>
<dbReference type="InterPro" id="IPR023477">
    <property type="entry name" value="Adenylate_kinase_AdkA"/>
</dbReference>
<dbReference type="InterPro" id="IPR027417">
    <property type="entry name" value="P-loop_NTPase"/>
</dbReference>
<dbReference type="NCBIfam" id="NF003122">
    <property type="entry name" value="PRK04040.1"/>
    <property type="match status" value="1"/>
</dbReference>
<dbReference type="Pfam" id="PF13207">
    <property type="entry name" value="AAA_17"/>
    <property type="match status" value="1"/>
</dbReference>
<dbReference type="SUPFAM" id="SSF52540">
    <property type="entry name" value="P-loop containing nucleoside triphosphate hydrolases"/>
    <property type="match status" value="1"/>
</dbReference>
<sequence>MKNKVVVVTGVPGVGGTTVTQKAMDILSEEGLNYKMVNFGSAMFDVANEEGLASDRDQMRKLDPETQKRIQKMAGRKIAEMAKESPVAVDTHSTVKTPKGYLPGLPAWVLTELNPDIVIVVETDGDEILMRRLSDESRKRDLETTASIEEHQFMNRAAAMSYGVLTGATVKIVKNKNGLVDKAVEELISVLR</sequence>
<evidence type="ECO:0000255" key="1">
    <source>
        <dbReference type="HAMAP-Rule" id="MF_00234"/>
    </source>
</evidence>